<dbReference type="EC" id="1.14.14.114" evidence="4 5 12 16"/>
<dbReference type="EMBL" id="DQ268763">
    <property type="protein sequence ID" value="ABB82944.1"/>
    <property type="molecule type" value="mRNA"/>
</dbReference>
<dbReference type="EMBL" id="DQ453967">
    <property type="protein sequence ID" value="ABE57266.1"/>
    <property type="molecule type" value="mRNA"/>
</dbReference>
<dbReference type="EMBL" id="DQ826743">
    <property type="protein sequence ID" value="ABG91755.1"/>
    <property type="molecule type" value="Genomic_DNA"/>
</dbReference>
<dbReference type="EMBL" id="EF197889">
    <property type="protein sequence ID" value="ABM88788.1"/>
    <property type="molecule type" value="mRNA"/>
</dbReference>
<dbReference type="EMBL" id="DQ872632">
    <property type="protein sequence ID" value="ABI31728.1"/>
    <property type="molecule type" value="mRNA"/>
</dbReference>
<dbReference type="EMBL" id="EU684540">
    <property type="protein sequence ID" value="ACF74516.1"/>
    <property type="molecule type" value="mRNA"/>
</dbReference>
<dbReference type="EMBL" id="HQ315834">
    <property type="protein sequence ID" value="ADU25498.1"/>
    <property type="molecule type" value="mRNA"/>
</dbReference>
<dbReference type="EMBL" id="JN594504">
    <property type="protein sequence ID" value="AFO64615.1"/>
    <property type="molecule type" value="mRNA"/>
</dbReference>
<dbReference type="EMBL" id="AB706288">
    <property type="protein sequence ID" value="BAM68808.1"/>
    <property type="molecule type" value="mRNA"/>
</dbReference>
<dbReference type="EMBL" id="JQ254992">
    <property type="protein sequence ID" value="AFP19100.1"/>
    <property type="molecule type" value="mRNA"/>
</dbReference>
<dbReference type="EMBL" id="KJ609178">
    <property type="protein sequence ID" value="AIC83779.1"/>
    <property type="molecule type" value="mRNA"/>
</dbReference>
<dbReference type="EMBL" id="PKPP01014078">
    <property type="protein sequence ID" value="PWA40082.1"/>
    <property type="molecule type" value="Genomic_DNA"/>
</dbReference>
<dbReference type="EMBL" id="HM048927">
    <property type="protein sequence ID" value="ADI24872.1"/>
    <property type="molecule type" value="Genomic_DNA"/>
</dbReference>
<dbReference type="EMBL" id="DQ667170">
    <property type="protein sequence ID" value="ABG49365.1"/>
    <property type="status" value="ALT_INIT"/>
    <property type="molecule type" value="Genomic_DNA"/>
</dbReference>
<dbReference type="EMBL" id="DQ315671">
    <property type="protein sequence ID" value="ABC41927.1"/>
    <property type="status" value="ALT_INIT"/>
    <property type="molecule type" value="mRNA"/>
</dbReference>
<dbReference type="SMR" id="Q1PS23"/>
<dbReference type="STRING" id="35608.Q1PS23"/>
<dbReference type="GlyCosmos" id="Q1PS23">
    <property type="glycosylation" value="5 sites, No reported glycans"/>
</dbReference>
<dbReference type="KEGG" id="ag:ABB82944"/>
<dbReference type="OrthoDB" id="1470350at2759"/>
<dbReference type="BRENDA" id="1.14.13.158">
    <property type="organism ID" value="7150"/>
</dbReference>
<dbReference type="BRENDA" id="1.14.14.114">
    <property type="organism ID" value="7150"/>
</dbReference>
<dbReference type="Proteomes" id="UP000245207">
    <property type="component" value="Unassembled WGS sequence"/>
</dbReference>
<dbReference type="GO" id="GO:0005783">
    <property type="term" value="C:endoplasmic reticulum"/>
    <property type="evidence" value="ECO:0000314"/>
    <property type="project" value="UniProtKB"/>
</dbReference>
<dbReference type="GO" id="GO:0005789">
    <property type="term" value="C:endoplasmic reticulum membrane"/>
    <property type="evidence" value="ECO:0007669"/>
    <property type="project" value="UniProtKB-SubCell"/>
</dbReference>
<dbReference type="GO" id="GO:0062150">
    <property type="term" value="F:amorpha-4,11-diene 12-monooxygenase activity"/>
    <property type="evidence" value="ECO:0000314"/>
    <property type="project" value="UniProtKB"/>
</dbReference>
<dbReference type="GO" id="GO:0020037">
    <property type="term" value="F:heme binding"/>
    <property type="evidence" value="ECO:0007669"/>
    <property type="project" value="InterPro"/>
</dbReference>
<dbReference type="GO" id="GO:0005506">
    <property type="term" value="F:iron ion binding"/>
    <property type="evidence" value="ECO:0007669"/>
    <property type="project" value="InterPro"/>
</dbReference>
<dbReference type="GO" id="GO:0004497">
    <property type="term" value="F:monooxygenase activity"/>
    <property type="evidence" value="ECO:0007669"/>
    <property type="project" value="UniProtKB-KW"/>
</dbReference>
<dbReference type="GO" id="GO:0051762">
    <property type="term" value="P:sesquiterpene biosynthetic process"/>
    <property type="evidence" value="ECO:0000314"/>
    <property type="project" value="UniProtKB"/>
</dbReference>
<dbReference type="CDD" id="cd11072">
    <property type="entry name" value="CYP71-like"/>
    <property type="match status" value="1"/>
</dbReference>
<dbReference type="FunFam" id="1.10.630.10:FF:000043">
    <property type="entry name" value="Cytochrome P450 99A2"/>
    <property type="match status" value="1"/>
</dbReference>
<dbReference type="Gene3D" id="1.10.630.10">
    <property type="entry name" value="Cytochrome P450"/>
    <property type="match status" value="1"/>
</dbReference>
<dbReference type="InterPro" id="IPR001128">
    <property type="entry name" value="Cyt_P450"/>
</dbReference>
<dbReference type="InterPro" id="IPR017972">
    <property type="entry name" value="Cyt_P450_CS"/>
</dbReference>
<dbReference type="InterPro" id="IPR002401">
    <property type="entry name" value="Cyt_P450_E_grp-I"/>
</dbReference>
<dbReference type="InterPro" id="IPR036396">
    <property type="entry name" value="Cyt_P450_sf"/>
</dbReference>
<dbReference type="PANTHER" id="PTHR47955">
    <property type="entry name" value="CYTOCHROME P450 FAMILY 71 PROTEIN"/>
    <property type="match status" value="1"/>
</dbReference>
<dbReference type="PANTHER" id="PTHR47955:SF9">
    <property type="entry name" value="PREMNASPIRODIENE OXYGENASE-LIKE"/>
    <property type="match status" value="1"/>
</dbReference>
<dbReference type="Pfam" id="PF00067">
    <property type="entry name" value="p450"/>
    <property type="match status" value="1"/>
</dbReference>
<dbReference type="PRINTS" id="PR00463">
    <property type="entry name" value="EP450I"/>
</dbReference>
<dbReference type="PRINTS" id="PR00385">
    <property type="entry name" value="P450"/>
</dbReference>
<dbReference type="SUPFAM" id="SSF48264">
    <property type="entry name" value="Cytochrome P450"/>
    <property type="match status" value="1"/>
</dbReference>
<dbReference type="PROSITE" id="PS00086">
    <property type="entry name" value="CYTOCHROME_P450"/>
    <property type="match status" value="1"/>
</dbReference>
<gene>
    <name evidence="18 19 25" type="primary">CYP71AV1</name>
</gene>
<accession>Q1PS23</accession>
<accession>A0A0G2R041</accession>
<accession>B4YUM0</accession>
<accession>D7RD93</accession>
<accession>G4WEL3</accession>
<accession>K7PPJ8</accession>
<accession>K7ZNY4</accession>
<accession>Q0GC64</accession>
<accession>Q0GYM3</accession>
<accession>Q0PIP7</accession>
<accession>Q0Z841</accession>
<accession>Q2F517</accession>
<accession>R9QHY0</accession>
<keyword id="KW-0024">Alternative initiation</keyword>
<keyword id="KW-0256">Endoplasmic reticulum</keyword>
<keyword id="KW-0325">Glycoprotein</keyword>
<keyword id="KW-0349">Heme</keyword>
<keyword id="KW-0408">Iron</keyword>
<keyword id="KW-0472">Membrane</keyword>
<keyword id="KW-0479">Metal-binding</keyword>
<keyword id="KW-0503">Monooxygenase</keyword>
<keyword id="KW-0560">Oxidoreductase</keyword>
<keyword id="KW-1185">Reference proteome</keyword>
<keyword id="KW-0735">Signal-anchor</keyword>
<keyword id="KW-0812">Transmembrane</keyword>
<keyword id="KW-1133">Transmembrane helix</keyword>
<sequence>MKSILKAMALSLTTSIALATILLFVYKFATRSKSTKKSLPEPWRLPIIGHMHHLIGTTPHRGVRDLARKYGSLMHLQLGEVPTIVVSSPKWAKEILTTYDISFANRPETLTGEIVLYHNTDVVLAPYGEYWRQLRKICTLELLSVKKVKSFQSLREEECWNLVQEIKASGSGRPVNLSENVFKLIATILSRAAFGKGIKDQKELTEIVKEILRQTGGFDVADIFPSKKFLHHLSGKRARLTSLRKKIDNLIDNLVAEHTVNTSSKTNETLLDVLLRLKDSAEFPLTSDNIKAIILDMFGAGTDTSSSTIEWAISELIKCPKAMEKVQAELRKALNGKEKIHEEDIQELSYLNMVIKETLRLHPPLPLVLPRECRQPVNLAGYNIPNKTKLIVNVFAINRDPEYWKDAEAFIPERFENSSATVMGAEYEYLPFGAGRRMCPGAALGLANVQLPLANILYHFNWKLPNGVSYDQIDMTESSGATMQRKTELLLVPSF</sequence>
<name>AMO_ARTAN</name>
<comment type="function">
    <text evidence="4 5 7 12 21">Involved in the biosynthesis of the antimalarial endoperoxide artemisinin (PubMed:16458889, PubMed:16612385, PubMed:20351109, PubMed:27488942). Catalyzes three consecutive oxidations of amorpha-4,11-diene to produce artemisinic acid, with artemisinic alcohol and artemisinic aldehyde as intermediates products, but is unable to oxidize germacrene A (PubMed:16458889, PubMed:16612385, PubMed:20351109, PubMed:23246612). No activity with limonene, alpha-pinene, beta-pinene, pinocarveol, (-)-alloisolongifolene, caryophyllene, (-)-alpha-gurjunene, (+)-gamma-gurjunene, (+)-ledene, (+)-beta-selinene and (+)-valencene as substrates (PubMed:16458889, PubMed:16612385, PubMed:20351109).</text>
</comment>
<comment type="catalytic activity">
    <reaction evidence="4 5 12 16">
        <text>(+)-amorpha-4,11-diene + 3 reduced [NADPH--hemoprotein reductase] + 3 O2 = (+)-artemisinate + 3 oxidized [NADPH--hemoprotein reductase] + 4 H2O + 4 H(+)</text>
        <dbReference type="Rhea" id="RHEA:32999"/>
        <dbReference type="Rhea" id="RHEA-COMP:11964"/>
        <dbReference type="Rhea" id="RHEA-COMP:11965"/>
        <dbReference type="ChEBI" id="CHEBI:15377"/>
        <dbReference type="ChEBI" id="CHEBI:15378"/>
        <dbReference type="ChEBI" id="CHEBI:15379"/>
        <dbReference type="ChEBI" id="CHEBI:52026"/>
        <dbReference type="ChEBI" id="CHEBI:57618"/>
        <dbReference type="ChEBI" id="CHEBI:58210"/>
        <dbReference type="ChEBI" id="CHEBI:64782"/>
        <dbReference type="EC" id="1.14.14.114"/>
    </reaction>
    <physiologicalReaction direction="left-to-right" evidence="4 5 12 16">
        <dbReference type="Rhea" id="RHEA:33000"/>
    </physiologicalReaction>
</comment>
<comment type="cofactor">
    <cofactor evidence="1">
        <name>heme</name>
        <dbReference type="ChEBI" id="CHEBI:30413"/>
    </cofactor>
</comment>
<comment type="biophysicochemical properties">
    <kinetics>
        <Vmax evidence="16">0.04 nmol/min/mg enzyme with artemisinic alcohol as substrate</Vmax>
        <Vmax evidence="16">0.02 nmol/min/mg enzyme with dihydroartemisinic alcohol as substrate</Vmax>
        <Vmax evidence="16">0.51 nmol/min/mg enzyme with artemisinic aldehyde as substrate</Vmax>
    </kinetics>
</comment>
<comment type="pathway">
    <text evidence="22">Sesquiterpene biosynthesis.</text>
</comment>
<comment type="subcellular location">
    <subcellularLocation>
        <location evidence="14">Endoplasmic reticulum membrane</location>
        <topology evidence="2">Single-pass type II membrane protein</topology>
    </subcellularLocation>
</comment>
<comment type="alternative products">
    <event type="alternative initiation"/>
    <isoform>
        <id>Q1PS23-1</id>
        <name>1</name>
        <name evidence="20">AMOLAP</name>
        <sequence type="displayed"/>
    </isoform>
    <isoform>
        <id>Q1PS23-2</id>
        <name>2</name>
        <name evidence="20">AMOHAP</name>
        <sequence type="described" ref="VSP_060270"/>
    </isoform>
</comment>
<comment type="tissue specificity">
    <text evidence="4 6 8 9 11 15">Highly expressed both in apical and sub-apical cells of glandular secretory trichomes (PubMed:19664791, PubMed:22195571). Detected in flower buds, leaves and roots (PubMed:22986332). Also present in non-glandular trichome cells (PubMed:30851440).</text>
</comment>
<comment type="induction">
    <text evidence="11 17">Strongly induced by gibberellic acid (GA(3)) leading to an increased artemisinin yield (Ref.19). Accumulates in the presence of trans-cinnamic acid (PubMed:22986332).</text>
</comment>
<comment type="biotechnology">
    <text evidence="23 24">Artemisinin and derivatives (e.g. artesunate), are antimalarial drugs due to their endoperoxidase properties; they also display multiple pharmacological actions against inflammation,viral infections, and cell and tumor proliferation (PubMed:32405226, PubMed:32514287). Artesunate may be a promising treatment for COVID-19 mediated by the severe acute respiratory syndrome coronavirus 2 (2019-nCoV) (SARS-CoV-2) because of its anti-inflammatory activity, NF-kappaB (nuclear factor kappa B)-coronavirus effect and chloroquine-like endocytosis inhibition mechanism (PubMed:32405226, PubMed:32514287).</text>
</comment>
<comment type="biotechnology">
    <text evidence="5 10 13">Yeast (S.cerevisiae) has been engineered to produce artemisinic-acid, a precursor of the antimalarial artemisinin compound, by expressing AMS1/ADS, CYP71AV1, ADH1 and ALDH1 in conjunction with CYB5 and CPR1.</text>
</comment>
<comment type="miscellaneous">
    <molecule>Isoform 2</molecule>
    <text evidence="14">Reduced production of artemisinic acid (AA) but increased accumulation of artemisinic alcohol (AAOH) and artemisinic aldehyde (AAA), and production of (DHAA) probably due to a lower catalytic activity.</text>
</comment>
<comment type="similarity">
    <text evidence="26">Belongs to the cytochrome P450 family.</text>
</comment>
<comment type="sequence caution" evidence="26">
    <conflict type="erroneous initiation">
        <sequence resource="EMBL-CDS" id="ABC41927"/>
    </conflict>
    <text>Truncated N-terminus.</text>
</comment>
<comment type="sequence caution" evidence="26">
    <conflict type="erroneous initiation">
        <sequence resource="EMBL-CDS" id="ABG49365"/>
    </conflict>
    <text>Truncated N-terminus.</text>
</comment>
<proteinExistence type="evidence at protein level"/>
<feature type="chain" id="PRO_0000412767" description="Amorpha-4,11-diene 12-monooxygenase">
    <location>
        <begin position="1"/>
        <end position="495"/>
    </location>
</feature>
<feature type="topological domain" description="Cytoplasmic" evidence="2">
    <location>
        <begin position="1"/>
        <end position="6"/>
    </location>
</feature>
<feature type="transmembrane region" description="Helical; Signal-anchor for type II membrane protein" evidence="2">
    <location>
        <begin position="7"/>
        <end position="29"/>
    </location>
</feature>
<feature type="topological domain" description="Lumenal" evidence="2">
    <location>
        <begin position="30"/>
        <end position="495"/>
    </location>
</feature>
<feature type="binding site" description="axial binding residue" evidence="1">
    <location>
        <position position="439"/>
    </location>
    <ligand>
        <name>heme</name>
        <dbReference type="ChEBI" id="CHEBI:30413"/>
    </ligand>
    <ligandPart>
        <name>Fe</name>
        <dbReference type="ChEBI" id="CHEBI:18248"/>
    </ligandPart>
</feature>
<feature type="site" description="Required for artemisinic alcohol oxidizing activity that catalyzes the conversion of artemisinic alcohol to artemisinic aldehyde" evidence="12">
    <location>
        <position position="479"/>
    </location>
</feature>
<feature type="glycosylation site" description="N-linked (GlcNAc...) asparagine" evidence="3">
    <location>
        <position position="176"/>
    </location>
</feature>
<feature type="glycosylation site" description="N-linked (GlcNAc...) asparagine" evidence="3">
    <location>
        <position position="261"/>
    </location>
</feature>
<feature type="glycosylation site" description="N-linked (GlcNAc...) asparagine" evidence="3">
    <location>
        <position position="267"/>
    </location>
</feature>
<feature type="glycosylation site" description="N-linked (GlcNAc...) asparagine" evidence="3">
    <location>
        <position position="386"/>
    </location>
</feature>
<feature type="glycosylation site" description="N-linked (GlcNAc...) asparagine" evidence="3">
    <location>
        <position position="417"/>
    </location>
</feature>
<feature type="splice variant" id="VSP_060270" description="In isoform 2." evidence="27">
    <location>
        <begin position="1"/>
        <end position="7"/>
    </location>
</feature>
<feature type="mutagenesis site" description="Reduced activity leading to a slightly reduced accumulation of artemisinic acid." evidence="12">
    <original>S</original>
    <variation>A</variation>
    <location>
        <position position="307"/>
    </location>
</feature>
<feature type="mutagenesis site" description="Reduced activity leading to a reduced accumulation of artemisinic acid." evidence="12">
    <original>L</original>
    <variation>M</variation>
    <location>
        <position position="369"/>
    </location>
</feature>
<feature type="mutagenesis site" description="Altered artemisinic alcohol oxidizing activity leading to the accumulation of artemisinic alcohol." evidence="12">
    <original>S</original>
    <variation>F</variation>
    <location>
        <position position="479"/>
    </location>
</feature>
<feature type="mutagenesis site" description="Reduced activity leading to a reduced accumulation of artemisinic acid." evidence="12">
    <original>M</original>
    <variation>V</variation>
    <location>
        <position position="483"/>
    </location>
</feature>
<feature type="sequence conflict" description="In Ref. 6; ACF74516." evidence="26" ref="6">
    <original>K</original>
    <variation>E</variation>
    <location>
        <position position="27"/>
    </location>
</feature>
<feature type="sequence conflict" description="In Ref. 8; AFO64615." evidence="26" ref="8">
    <original>G</original>
    <variation>R</variation>
    <location>
        <position position="62"/>
    </location>
</feature>
<feature type="sequence conflict" description="In Ref. 6; ACF74516." evidence="26" ref="6">
    <original>R</original>
    <variation>G</variation>
    <location>
        <position position="64"/>
    </location>
</feature>
<feature type="sequence conflict" description="In Ref. 5; ABI31728." evidence="26" ref="5">
    <original>I</original>
    <variation>V</variation>
    <location>
        <position position="95"/>
    </location>
</feature>
<feature type="sequence conflict" description="In Ref. 7; ADU25498 and 11; AIC83779." evidence="26" ref="7 11">
    <original>SF</original>
    <variation>TS</variation>
    <location>
        <begin position="102"/>
        <end position="103"/>
    </location>
</feature>
<feature type="sequence conflict" description="In Ref. 1; ABB82944, 3; ABG91755, 5; ABI31728, 14; ABC41927, 2; ABE57266, 10; AFP19100 and 8; AFO64615." ref="1 3 5 14 2 10 8">
    <original>S</original>
    <variation>T</variation>
    <location>
        <position position="102"/>
    </location>
</feature>
<feature type="sequence conflict" description="In Ref. 6; ACF74516." evidence="26" ref="6">
    <original>L</original>
    <variation>S</variation>
    <location>
        <position position="140"/>
    </location>
</feature>
<feature type="sequence conflict" description="In Ref. 14; ABC41927 and 3; ABG91755." evidence="26" ref="14 3">
    <original>V</original>
    <variation>I</variation>
    <location>
        <position position="181"/>
    </location>
</feature>
<feature type="sequence conflict" description="In Ref. 6; ACF74516." evidence="26" ref="6">
    <original>I</original>
    <variation>T</variation>
    <location>
        <position position="211"/>
    </location>
</feature>
<feature type="sequence conflict" description="In Ref. 5; ABI31728." evidence="26" ref="5">
    <original>S</original>
    <variation>P</variation>
    <location>
        <position position="314"/>
    </location>
</feature>
<feature type="sequence conflict" description="In Ref. 3; ABG91755." evidence="26" ref="3">
    <original>M</original>
    <variation>L</variation>
    <location>
        <position position="323"/>
    </location>
</feature>
<feature type="sequence conflict" description="In Ref. 4; ABG49365/ABM88788." evidence="26" ref="4">
    <original>G</original>
    <variation>D</variation>
    <location>
        <position position="467"/>
    </location>
</feature>
<feature type="sequence conflict" description="In Ref. 5; ABI31728 and 10; AFP19100." evidence="26" ref="5 10">
    <original>T</original>
    <variation>A</variation>
    <location>
        <position position="487"/>
    </location>
</feature>
<protein>
    <recommendedName>
        <fullName evidence="25">Amorpha-4,11-diene 12-monooxygenase</fullName>
        <ecNumber evidence="4 5 12 16">1.14.14.114</ecNumber>
    </recommendedName>
    <alternativeName>
        <fullName evidence="18 19">Amorpha-4,11-diene C-12 oxidase</fullName>
        <shortName evidence="20">Amorphadiene oxidase</shortName>
    </alternativeName>
    <alternativeName>
        <fullName evidence="18 19 25">Cytochrome P450 71AV1</fullName>
    </alternativeName>
</protein>
<organism>
    <name type="scientific">Artemisia annua</name>
    <name type="common">Sweet wormwood</name>
    <dbReference type="NCBI Taxonomy" id="35608"/>
    <lineage>
        <taxon>Eukaryota</taxon>
        <taxon>Viridiplantae</taxon>
        <taxon>Streptophyta</taxon>
        <taxon>Embryophyta</taxon>
        <taxon>Tracheophyta</taxon>
        <taxon>Spermatophyta</taxon>
        <taxon>Magnoliopsida</taxon>
        <taxon>eudicotyledons</taxon>
        <taxon>Gunneridae</taxon>
        <taxon>Pentapetalae</taxon>
        <taxon>asterids</taxon>
        <taxon>campanulids</taxon>
        <taxon>Asterales</taxon>
        <taxon>Asteraceae</taxon>
        <taxon>Asteroideae</taxon>
        <taxon>Anthemideae</taxon>
        <taxon>Artemisiinae</taxon>
        <taxon>Artemisia</taxon>
    </lineage>
</organism>
<reference key="1">
    <citation type="journal article" date="2006" name="Nature">
        <title>Production of the antimalarial drug precursor artemisinic acid in engineered yeast.</title>
        <authorList>
            <person name="Ro D.-K."/>
            <person name="Paradise E.M."/>
            <person name="Ouellet M."/>
            <person name="Fisher K.J."/>
            <person name="Newman K.L."/>
            <person name="Ndungu J.M."/>
            <person name="Ho K.A."/>
            <person name="Eachus R.A."/>
            <person name="Ham T.S."/>
            <person name="Kirby J."/>
            <person name="Chang M.C.Y."/>
            <person name="Withers S.T."/>
            <person name="Shiba Y."/>
            <person name="Sarpong R."/>
            <person name="Keasling J.D."/>
        </authorList>
    </citation>
    <scope>NUCLEOTIDE SEQUENCE [MRNA] (ISOFORM 1)</scope>
    <scope>FUNCTION</scope>
    <scope>CATALYTIC ACTIVITY</scope>
    <scope>BIOTECHNOLOGY</scope>
</reference>
<reference key="2">
    <citation type="submission" date="2006-03" db="EMBL/GenBank/DDBJ databases">
        <title>Amorpha-4,11-diene hydroxylase from Artemisia annua L.</title>
        <authorList>
            <person name="Olsson M.E."/>
            <person name="Teixeira M."/>
            <person name="Brodelius M."/>
            <person name="Brodelius P.E."/>
        </authorList>
    </citation>
    <scope>NUCLEOTIDE SEQUENCE [MRNA] (ISOFORM 2)</scope>
</reference>
<reference key="3">
    <citation type="submission" date="2006-06" db="EMBL/GenBank/DDBJ databases">
        <title>Induced expression and quantitation of artemisinin-related genes in Artemisia annua L.</title>
        <authorList>
            <person name="Yin L.L."/>
            <person name="Yang R.Y."/>
            <person name="Zeng Q.P."/>
        </authorList>
    </citation>
    <scope>NUCLEOTIDE SEQUENCE [GENOMIC DNA]</scope>
    <source>
        <tissue>Leaf</tissue>
    </source>
</reference>
<reference key="4">
    <citation type="submission" date="2006-12" db="EMBL/GenBank/DDBJ databases">
        <title>Production of artemisinic acid by engineered yeast.</title>
        <authorList>
            <person name="Kong J."/>
            <person name="Wang W."/>
            <person name="Cheng K."/>
        </authorList>
    </citation>
    <scope>NUCLEOTIDE SEQUENCE [MRNA] (ISOFORM 2)</scope>
</reference>
<reference key="5">
    <citation type="journal article" date="2008" name="Planta Med.">
        <title>Quantitative transcript profiling reveals down-regulation of A sterol pathway relevant gene and overexpression of artemisinin biogenetic genes in transgenic Artemisia annua plants.</title>
        <authorList>
            <person name="Yang R.-Y."/>
            <person name="Feng L.-L."/>
            <person name="Yang X.-Q."/>
            <person name="Yin L.-L."/>
            <person name="Xu X.-L."/>
            <person name="Zeng Q.-P."/>
        </authorList>
    </citation>
    <scope>NUCLEOTIDE SEQUENCE [MRNA] (ISOFORM 1)</scope>
    <source>
        <strain>cv. Feng-shun No.1</strain>
    </source>
</reference>
<reference key="6">
    <citation type="submission" date="2008-04" db="EMBL/GenBank/DDBJ databases">
        <authorList>
            <person name="Kim S.-H."/>
            <person name="Kim Y.-B."/>
            <person name="Rayhan M.U."/>
            <person name="Choi G.-E."/>
            <person name="Kim S.-U."/>
        </authorList>
    </citation>
    <scope>NUCLEOTIDE SEQUENCE [MRNA] (ISOFORM 1)</scope>
</reference>
<reference key="7">
    <citation type="submission" date="2010-09" db="EMBL/GenBank/DDBJ databases">
        <title>Cloning of cytochrome P450 monooxygenase (CYP71AV1) from Artemisia annua L.</title>
        <authorList>
            <person name="Banyai W."/>
            <person name="Supaibulwatana K."/>
        </authorList>
    </citation>
    <scope>NUCLEOTIDE SEQUENCE [MRNA] (ISOFORM 2)</scope>
</reference>
<reference key="8">
    <citation type="journal article" date="2012" name="Gene">
        <title>Characterization of cytochrome P450 monooxygenases isolated from trichome enriched fraction of Artemisia annua L. leaf.</title>
        <authorList>
            <person name="Misra A."/>
            <person name="Chanotiya C.S."/>
            <person name="Gupta M.M."/>
            <person name="Dwivedi U.N."/>
            <person name="Shasany A.K."/>
        </authorList>
    </citation>
    <scope>NUCLEOTIDE SEQUENCE [MRNA] (ISOFORM 2)</scope>
    <scope>TISSUE SPECIFICITY</scope>
    <scope>INDUCTION BY TRANS-CINNAMIC ACID</scope>
</reference>
<reference key="9">
    <citation type="journal article" date="2013" name="FEBS Lett.">
        <title>Comparative functional analysis of CYP71AV1 natural variants reveals an important residue for the successive oxidation of amorpha-4,11-diene.</title>
        <authorList>
            <person name="Komori A."/>
            <person name="Suzuki M."/>
            <person name="Seki H."/>
            <person name="Nishizawa T."/>
            <person name="Marion Meyer J.J."/>
            <person name="Shimizu H."/>
            <person name="Yokoyama S."/>
            <person name="Muranaka T."/>
        </authorList>
    </citation>
    <scope>NUCLEOTIDE SEQUENCE [MRNA] (ISOFORM 1)</scope>
    <scope>CATALYTIC ACTIVITY</scope>
    <scope>FUNCTION</scope>
    <scope>MUTAGENESIS OF SER-307; LEU-369; SER-479 AND MET-483</scope>
    <source>
        <tissue>Leaf</tissue>
    </source>
</reference>
<reference key="10">
    <citation type="journal article" date="2013" name="New Phytol.">
        <title>The metabolite chemotype of Nicotiana benthamiana transiently expressing artemisinin biosynthetic pathway genes is a function of CYP71AV1 type and relative gene dosage.</title>
        <authorList>
            <person name="Ting H.-M."/>
            <person name="Wang B."/>
            <person name="Ryden A.-M."/>
            <person name="Woittiez L."/>
            <person name="van Herpen T."/>
            <person name="Verstappen F.W.A."/>
            <person name="Ruyter-Spira C."/>
            <person name="Beekwilder J."/>
            <person name="Bouwmeester H.J."/>
            <person name="van der Krol A."/>
        </authorList>
    </citation>
    <scope>NUCLEOTIDE SEQUENCE [MRNA] (ISOFORM 2)</scope>
    <scope>SUBCELLULAR LOCATION</scope>
</reference>
<reference key="11">
    <citation type="submission" date="2014-03" db="EMBL/GenBank/DDBJ databases">
        <title>Molecular cloning of cytochrome P450 monooxygenase.</title>
        <authorList>
            <person name="Sankhuan D."/>
            <person name="Chowpongpang S."/>
            <person name="Kirdmanee C."/>
            <person name="Supaibulwatana K."/>
        </authorList>
    </citation>
    <scope>NUCLEOTIDE SEQUENCE [MRNA] (ISOFORM 2)</scope>
</reference>
<reference key="12">
    <citation type="journal article" date="2018" name="Mol. Plant">
        <title>The genome of Artemisia annua provides insight into the evolution of Asteraceae family and artemisinin biosynthesis.</title>
        <authorList>
            <person name="Shen Q."/>
            <person name="Zhang L."/>
            <person name="Liao Z."/>
            <person name="Wang S."/>
            <person name="Yan T."/>
            <person name="Shi P."/>
            <person name="Liu M."/>
            <person name="Fu X."/>
            <person name="Pan Q."/>
            <person name="Wang Y."/>
            <person name="Lv Z."/>
            <person name="Lu X."/>
            <person name="Zhang F."/>
            <person name="Jiang W."/>
            <person name="Ma Y."/>
            <person name="Chen M."/>
            <person name="Hao X."/>
            <person name="Li L."/>
            <person name="Tang Y."/>
            <person name="Lv G."/>
            <person name="Zhou Y."/>
            <person name="Sun X."/>
            <person name="Brodelius P.E."/>
            <person name="Rose J.K.C."/>
            <person name="Tang K."/>
        </authorList>
    </citation>
    <scope>NUCLEOTIDE SEQUENCE [LARGE SCALE GENOMIC DNA]</scope>
    <source>
        <strain>cv. Huhao1</strain>
        <tissue>Leaf</tissue>
    </source>
</reference>
<reference key="13">
    <citation type="submission" date="2010-03" db="EMBL/GenBank/DDBJ databases">
        <title>Promoter analysis of amorpha-4,11-diene monooxygenase (CYP71AV1) gene involved in artemisinin biosynthesis.</title>
        <authorList>
            <person name="Yang R.Y."/>
            <person name="Zeng Q.P."/>
        </authorList>
    </citation>
    <scope>NUCLEOTIDE SEQUENCE [GENOMIC DNA] OF 1-14</scope>
</reference>
<reference key="14">
    <citation type="journal article" date="2006" name="FEBS Lett.">
        <title>Artemisia annua L. (Asteraceae) trichome-specific cDNAs reveal CYP71AV1, a cytochrome P450 with a key role in the biosynthesis of the antimalarial sesquiterpene lactone artemisinin.</title>
        <authorList>
            <person name="Teoh K.H."/>
            <person name="Polichuk D.R."/>
            <person name="Reed D.W."/>
            <person name="Nowak G."/>
            <person name="Covello P.S."/>
        </authorList>
    </citation>
    <scope>NUCLEOTIDE SEQUENCE [MRNA] OF 2-495 (ISOFORM 1)</scope>
    <scope>FUNCTION</scope>
    <scope>CATALYTIC ACTIVITY</scope>
    <scope>TISSUE SPECIFICITY</scope>
</reference>
<reference key="15">
    <citation type="journal article" date="2009" name="Botany">
        <title>Molecular cloning of an aldehyde dehydrogenase implicated in artemisinin biosynthesis in Artemisia annua.</title>
        <authorList>
            <person name="Teoh K.H."/>
            <person name="Polichuk D.R."/>
            <person name="Reed D.W."/>
            <person name="Covello P.S."/>
        </authorList>
    </citation>
    <scope>CATALYTIC ACTIVITY</scope>
    <scope>BIOPHYSICOCHEMICAL PROPERTIES</scope>
</reference>
<reference key="16">
    <citation type="journal article" date="2009" name="Phytochemistry">
        <title>Localization of enzymes of artemisinin biosynthesis to the apical cells of glandular secretory trichomes of Artemisia annua L.</title>
        <authorList>
            <person name="Olsson M.E."/>
            <person name="Olofsson L.M."/>
            <person name="Lindahl A.-L."/>
            <person name="Lundgren A."/>
            <person name="Brodelius M."/>
            <person name="Brodelius P.E."/>
        </authorList>
    </citation>
    <scope>TISSUE SPECIFICITY</scope>
</reference>
<reference key="17">
    <citation type="journal article" date="2010" name="J. Biol. Chem.">
        <title>Biochemical conservation and evolution of germacrene A oxidase in asteraceae.</title>
        <authorList>
            <person name="Nguyen D.T."/>
            <person name="Goepfert J.C."/>
            <person name="Ikezawa N."/>
            <person name="Macnevin G."/>
            <person name="Kathiresan M."/>
            <person name="Conrad J."/>
            <person name="Spring O."/>
            <person name="Ro D.-K."/>
        </authorList>
    </citation>
    <scope>FUNCTION</scope>
</reference>
<reference key="18">
    <citation type="journal article" date="2011" name="BMC Plant Biol.">
        <title>Relative expression of genes of terpene metabolism in different tissues of Artemisia annua L.</title>
        <authorList>
            <person name="Olofsson L."/>
            <person name="Engstroem A."/>
            <person name="Lundgren A."/>
            <person name="Brodelius P.E."/>
        </authorList>
    </citation>
    <scope>TISSUE SPECIFICITY</scope>
</reference>
<reference key="19">
    <citation type="journal article" date="2011" name="Plant Growth Regul.">
        <title>Enhancement of artemisinin content and biomass in Artemisia annua by exogenous GA3 treatment.</title>
        <authorList>
            <person name="Banyai W."/>
            <person name="Mii M."/>
            <person name="Supaibulwatana K."/>
        </authorList>
    </citation>
    <scope>INDUCTION BY GIBBERELLIC ACID</scope>
</reference>
<reference key="20">
    <citation type="journal article" date="2012" name="Plant Sci.">
        <title>Trichome isolation with and without fixation using laser microdissection and pressure catapulting followed by RNA amplification: expression of genes of terpene metabolism in apical and sub-apical trichome cells of Artemisia annua L.</title>
        <authorList>
            <person name="Olofsson L."/>
            <person name="Lundgren A."/>
            <person name="Brodelius P.E."/>
        </authorList>
    </citation>
    <scope>TISSUE SPECIFICITY</scope>
</reference>
<reference key="21">
    <citation type="journal article" date="2012" name="Proc. Natl. Acad. Sci. U.S.A.">
        <title>Production of amorphadiene in yeast, and its conversion to dihydroartemisinic acid, precursor to the antimalarial agent artemisinin.</title>
        <authorList>
            <person name="Westfall P.J."/>
            <person name="Pitera D.J."/>
            <person name="Lenihan J.R."/>
            <person name="Eng D."/>
            <person name="Woolard F.X."/>
            <person name="Regentin R."/>
            <person name="Horning T."/>
            <person name="Tsuruta H."/>
            <person name="Melis D.J."/>
            <person name="Owens A."/>
            <person name="Fickes S."/>
            <person name="Diola D."/>
            <person name="Benjamin K.R."/>
            <person name="Keasling J.D."/>
            <person name="Leavell M.D."/>
            <person name="McPhee D.J."/>
            <person name="Renninger N.S."/>
            <person name="Newman J.D."/>
            <person name="Paddon C.J."/>
        </authorList>
    </citation>
    <scope>BIOTECHNOLOGY</scope>
</reference>
<reference key="22">
    <citation type="journal article" date="2013" name="Nature">
        <title>High-level semi-synthetic production of the potent antimalarial artemisinin.</title>
        <authorList>
            <person name="Paddon C.J."/>
            <person name="Westfall P.J."/>
            <person name="Pitera D.J."/>
            <person name="Benjamin K."/>
            <person name="Fisher K."/>
            <person name="McPhee D."/>
            <person name="Leavell M.D."/>
            <person name="Tai A."/>
            <person name="Main A."/>
            <person name="Eng D."/>
            <person name="Polichuk D.R."/>
            <person name="Teoh K.H."/>
            <person name="Reed D.W."/>
            <person name="Treynor T."/>
            <person name="Lenihan J."/>
            <person name="Fleck M."/>
            <person name="Bajad S."/>
            <person name="Dang G."/>
            <person name="Diola D."/>
            <person name="Dorin G."/>
            <person name="Ellens K.W."/>
            <person name="Fickes S."/>
            <person name="Galazzo J."/>
            <person name="Gaucher S.P."/>
            <person name="Geistlinger T."/>
            <person name="Henry R."/>
            <person name="Hepp M."/>
            <person name="Horning T."/>
            <person name="Iqbal T."/>
            <person name="Jiang H."/>
            <person name="Kizer L."/>
            <person name="Lieu B."/>
            <person name="Melis D."/>
            <person name="Moss N."/>
            <person name="Regentin R."/>
            <person name="Secrest S."/>
            <person name="Tsuruta H."/>
            <person name="Vazquez R."/>
            <person name="Westblade L.F."/>
            <person name="Xu L."/>
            <person name="Yu M."/>
            <person name="Zhang Y."/>
            <person name="Zhao L."/>
            <person name="Lievense J."/>
            <person name="Covello P.S."/>
            <person name="Keasling J.D."/>
            <person name="Reiling K.K."/>
            <person name="Renninger N.S."/>
            <person name="Newman J.D."/>
        </authorList>
    </citation>
    <scope>BIOTECHNOLOGY</scope>
</reference>
<reference key="23">
    <citation type="journal article" date="2016" name="Angew. Chem. Int. Ed.">
        <title>Artemisinin-A Gift from Traditional Chinese Medicine to the World (Nobel Lecture).</title>
        <authorList>
            <person name="Tu Y."/>
        </authorList>
    </citation>
    <scope>REVIEW ON ARTEMISININ ANTIMALARIAL PROPERTIES</scope>
</reference>
<reference key="24">
    <citation type="journal article" date="2019" name="Mol. Plant">
        <title>Artemisinin biosynthesis in non-glandular trichome cells of Artemisia annua.</title>
        <authorList>
            <person name="Judd R."/>
            <person name="Bagley M.C."/>
            <person name="Li M."/>
            <person name="Zhu Y."/>
            <person name="Lei C."/>
            <person name="Yuzuak S."/>
            <person name="Ekeloef M."/>
            <person name="Pu G."/>
            <person name="Zhao X."/>
            <person name="Muddiman D.C."/>
            <person name="Xie D.-Y."/>
        </authorList>
    </citation>
    <scope>TISSUE SPECIFICITY</scope>
</reference>
<reference key="25">
    <citation type="journal article" date="2019" name="Nat. Prod. Rep.">
        <title>Non-volatile natural products in plant glandular trichomes: chemistry, biological activities and biosynthesis.</title>
        <authorList>
            <person name="Liu Y."/>
            <person name="Jing S.-X."/>
            <person name="Luo S.-H."/>
            <person name="Li S.-H."/>
        </authorList>
    </citation>
    <scope>PATHWAY</scope>
    <scope>REVIEW</scope>
</reference>
<reference key="26">
    <citation type="journal article" date="2020" name="Chin. Med. J.">
        <title>Artesunate: could be an alternative drug to chloroquine in COVID-19 treatment?</title>
        <authorList>
            <person name="Uzun T."/>
            <person name="Toptas O."/>
        </authorList>
    </citation>
    <scope>BIOTECHNOLOGY</scope>
</reference>
<reference key="27">
    <citation type="journal article" date="2020" name="Pharmacol. Res.">
        <title>Anti-malarial drug, artemisinin and its derivatives for the treatment of respiratory diseases.</title>
        <authorList>
            <person name="Cheong D.H.J."/>
            <person name="Tan D.W.S."/>
            <person name="Wong F.W.S."/>
            <person name="Tran T."/>
        </authorList>
    </citation>
    <scope>BIOTECHNOLOGY</scope>
    <scope>REVIEW</scope>
</reference>
<evidence type="ECO:0000250" key="1">
    <source>
        <dbReference type="UniProtKB" id="P04798"/>
    </source>
</evidence>
<evidence type="ECO:0000255" key="2"/>
<evidence type="ECO:0000255" key="3">
    <source>
        <dbReference type="PROSITE-ProRule" id="PRU00498"/>
    </source>
</evidence>
<evidence type="ECO:0000269" key="4">
    <source>
    </source>
</evidence>
<evidence type="ECO:0000269" key="5">
    <source>
    </source>
</evidence>
<evidence type="ECO:0000269" key="6">
    <source>
    </source>
</evidence>
<evidence type="ECO:0000269" key="7">
    <source>
    </source>
</evidence>
<evidence type="ECO:0000269" key="8">
    <source>
    </source>
</evidence>
<evidence type="ECO:0000269" key="9">
    <source>
    </source>
</evidence>
<evidence type="ECO:0000269" key="10">
    <source>
    </source>
</evidence>
<evidence type="ECO:0000269" key="11">
    <source>
    </source>
</evidence>
<evidence type="ECO:0000269" key="12">
    <source>
    </source>
</evidence>
<evidence type="ECO:0000269" key="13">
    <source>
    </source>
</evidence>
<evidence type="ECO:0000269" key="14">
    <source>
    </source>
</evidence>
<evidence type="ECO:0000269" key="15">
    <source>
    </source>
</evidence>
<evidence type="ECO:0000269" key="16">
    <source ref="15"/>
</evidence>
<evidence type="ECO:0000269" key="17">
    <source ref="19"/>
</evidence>
<evidence type="ECO:0000303" key="18">
    <source>
    </source>
</evidence>
<evidence type="ECO:0000303" key="19">
    <source>
    </source>
</evidence>
<evidence type="ECO:0000303" key="20">
    <source>
    </source>
</evidence>
<evidence type="ECO:0000303" key="21">
    <source>
    </source>
</evidence>
<evidence type="ECO:0000303" key="22">
    <source>
    </source>
</evidence>
<evidence type="ECO:0000303" key="23">
    <source>
    </source>
</evidence>
<evidence type="ECO:0000303" key="24">
    <source>
    </source>
</evidence>
<evidence type="ECO:0000303" key="25">
    <source ref="6"/>
</evidence>
<evidence type="ECO:0000305" key="26"/>
<evidence type="ECO:0000305" key="27">
    <source>
    </source>
</evidence>